<accession>Q21U89</accession>
<gene>
    <name evidence="1" type="primary">hisE</name>
    <name type="ordered locus">Rfer_2953</name>
</gene>
<comment type="catalytic activity">
    <reaction evidence="1">
        <text>1-(5-phospho-beta-D-ribosyl)-ATP + H2O = 1-(5-phospho-beta-D-ribosyl)-5'-AMP + diphosphate + H(+)</text>
        <dbReference type="Rhea" id="RHEA:22828"/>
        <dbReference type="ChEBI" id="CHEBI:15377"/>
        <dbReference type="ChEBI" id="CHEBI:15378"/>
        <dbReference type="ChEBI" id="CHEBI:33019"/>
        <dbReference type="ChEBI" id="CHEBI:59457"/>
        <dbReference type="ChEBI" id="CHEBI:73183"/>
        <dbReference type="EC" id="3.6.1.31"/>
    </reaction>
</comment>
<comment type="pathway">
    <text evidence="1">Amino-acid biosynthesis; L-histidine biosynthesis; L-histidine from 5-phospho-alpha-D-ribose 1-diphosphate: step 2/9.</text>
</comment>
<comment type="subcellular location">
    <subcellularLocation>
        <location evidence="1">Cytoplasm</location>
    </subcellularLocation>
</comment>
<comment type="similarity">
    <text evidence="1">Belongs to the PRA-PH family.</text>
</comment>
<protein>
    <recommendedName>
        <fullName evidence="1">Phosphoribosyl-ATP pyrophosphatase</fullName>
        <shortName evidence="1">PRA-PH</shortName>
        <ecNumber evidence="1">3.6.1.31</ecNumber>
    </recommendedName>
</protein>
<sequence>MTANTSTSDTLAHLARVIESRLPQNGGDPDTSYVARLLHKGPNAFLKKIGEEATEVVMAAKDADNGGDKTKVVYEVADLWFHCMIALAHYGLSPADVVVELDRRAGTSGIEEKAMRKVTAREDEQPGAAQ</sequence>
<organism>
    <name type="scientific">Albidiferax ferrireducens (strain ATCC BAA-621 / DSM 15236 / T118)</name>
    <name type="common">Rhodoferax ferrireducens</name>
    <dbReference type="NCBI Taxonomy" id="338969"/>
    <lineage>
        <taxon>Bacteria</taxon>
        <taxon>Pseudomonadati</taxon>
        <taxon>Pseudomonadota</taxon>
        <taxon>Betaproteobacteria</taxon>
        <taxon>Burkholderiales</taxon>
        <taxon>Comamonadaceae</taxon>
        <taxon>Rhodoferax</taxon>
    </lineage>
</organism>
<keyword id="KW-0028">Amino-acid biosynthesis</keyword>
<keyword id="KW-0067">ATP-binding</keyword>
<keyword id="KW-0963">Cytoplasm</keyword>
<keyword id="KW-0368">Histidine biosynthesis</keyword>
<keyword id="KW-0378">Hydrolase</keyword>
<keyword id="KW-0547">Nucleotide-binding</keyword>
<keyword id="KW-1185">Reference proteome</keyword>
<reference key="1">
    <citation type="submission" date="2006-02" db="EMBL/GenBank/DDBJ databases">
        <title>Complete sequence of chromosome of Rhodoferax ferrireducens DSM 15236.</title>
        <authorList>
            <person name="Copeland A."/>
            <person name="Lucas S."/>
            <person name="Lapidus A."/>
            <person name="Barry K."/>
            <person name="Detter J.C."/>
            <person name="Glavina del Rio T."/>
            <person name="Hammon N."/>
            <person name="Israni S."/>
            <person name="Pitluck S."/>
            <person name="Brettin T."/>
            <person name="Bruce D."/>
            <person name="Han C."/>
            <person name="Tapia R."/>
            <person name="Gilna P."/>
            <person name="Kiss H."/>
            <person name="Schmutz J."/>
            <person name="Larimer F."/>
            <person name="Land M."/>
            <person name="Kyrpides N."/>
            <person name="Ivanova N."/>
            <person name="Richardson P."/>
        </authorList>
    </citation>
    <scope>NUCLEOTIDE SEQUENCE [LARGE SCALE GENOMIC DNA]</scope>
    <source>
        <strain>ATCC BAA-621 / DSM 15236 / T118</strain>
    </source>
</reference>
<proteinExistence type="inferred from homology"/>
<evidence type="ECO:0000255" key="1">
    <source>
        <dbReference type="HAMAP-Rule" id="MF_01020"/>
    </source>
</evidence>
<feature type="chain" id="PRO_0000319661" description="Phosphoribosyl-ATP pyrophosphatase">
    <location>
        <begin position="1"/>
        <end position="130"/>
    </location>
</feature>
<dbReference type="EC" id="3.6.1.31" evidence="1"/>
<dbReference type="EMBL" id="CP000267">
    <property type="protein sequence ID" value="ABD70664.1"/>
    <property type="molecule type" value="Genomic_DNA"/>
</dbReference>
<dbReference type="RefSeq" id="WP_011465230.1">
    <property type="nucleotide sequence ID" value="NC_007908.1"/>
</dbReference>
<dbReference type="SMR" id="Q21U89"/>
<dbReference type="STRING" id="338969.Rfer_2953"/>
<dbReference type="KEGG" id="rfr:Rfer_2953"/>
<dbReference type="eggNOG" id="COG0140">
    <property type="taxonomic scope" value="Bacteria"/>
</dbReference>
<dbReference type="HOGENOM" id="CLU_123337_1_2_4"/>
<dbReference type="OrthoDB" id="9814738at2"/>
<dbReference type="UniPathway" id="UPA00031">
    <property type="reaction ID" value="UER00007"/>
</dbReference>
<dbReference type="Proteomes" id="UP000008332">
    <property type="component" value="Chromosome"/>
</dbReference>
<dbReference type="GO" id="GO:0005737">
    <property type="term" value="C:cytoplasm"/>
    <property type="evidence" value="ECO:0007669"/>
    <property type="project" value="UniProtKB-SubCell"/>
</dbReference>
<dbReference type="GO" id="GO:0005524">
    <property type="term" value="F:ATP binding"/>
    <property type="evidence" value="ECO:0007669"/>
    <property type="project" value="UniProtKB-KW"/>
</dbReference>
<dbReference type="GO" id="GO:0004636">
    <property type="term" value="F:phosphoribosyl-ATP diphosphatase activity"/>
    <property type="evidence" value="ECO:0007669"/>
    <property type="project" value="UniProtKB-UniRule"/>
</dbReference>
<dbReference type="GO" id="GO:0000105">
    <property type="term" value="P:L-histidine biosynthetic process"/>
    <property type="evidence" value="ECO:0007669"/>
    <property type="project" value="UniProtKB-UniRule"/>
</dbReference>
<dbReference type="CDD" id="cd11534">
    <property type="entry name" value="NTP-PPase_HisIE_like"/>
    <property type="match status" value="1"/>
</dbReference>
<dbReference type="Gene3D" id="1.10.287.1080">
    <property type="entry name" value="MazG-like"/>
    <property type="match status" value="1"/>
</dbReference>
<dbReference type="HAMAP" id="MF_01020">
    <property type="entry name" value="HisE"/>
    <property type="match status" value="1"/>
</dbReference>
<dbReference type="InterPro" id="IPR008179">
    <property type="entry name" value="HisE"/>
</dbReference>
<dbReference type="InterPro" id="IPR021130">
    <property type="entry name" value="PRib-ATP_PPHydrolase-like"/>
</dbReference>
<dbReference type="NCBIfam" id="TIGR03188">
    <property type="entry name" value="histidine_hisI"/>
    <property type="match status" value="1"/>
</dbReference>
<dbReference type="NCBIfam" id="NF001611">
    <property type="entry name" value="PRK00400.1-3"/>
    <property type="match status" value="1"/>
</dbReference>
<dbReference type="PANTHER" id="PTHR42945">
    <property type="entry name" value="HISTIDINE BIOSYNTHESIS BIFUNCTIONAL PROTEIN"/>
    <property type="match status" value="1"/>
</dbReference>
<dbReference type="PANTHER" id="PTHR42945:SF9">
    <property type="entry name" value="HISTIDINE BIOSYNTHESIS BIFUNCTIONAL PROTEIN HISIE"/>
    <property type="match status" value="1"/>
</dbReference>
<dbReference type="Pfam" id="PF01503">
    <property type="entry name" value="PRA-PH"/>
    <property type="match status" value="1"/>
</dbReference>
<dbReference type="SUPFAM" id="SSF101386">
    <property type="entry name" value="all-alpha NTP pyrophosphatases"/>
    <property type="match status" value="1"/>
</dbReference>
<name>HIS2_ALBFT</name>